<protein>
    <recommendedName>
        <fullName evidence="9">Pectinesterase inhibitor 4</fullName>
    </recommendedName>
    <alternativeName>
        <fullName evidence="8">Pectin methylesterase inhibitor 4</fullName>
        <shortName evidence="9">AtPMEI4</shortName>
    </alternativeName>
</protein>
<name>PMEI4_ARATH</name>
<organism>
    <name type="scientific">Arabidopsis thaliana</name>
    <name type="common">Mouse-ear cress</name>
    <dbReference type="NCBI Taxonomy" id="3702"/>
    <lineage>
        <taxon>Eukaryota</taxon>
        <taxon>Viridiplantae</taxon>
        <taxon>Streptophyta</taxon>
        <taxon>Embryophyta</taxon>
        <taxon>Tracheophyta</taxon>
        <taxon>Spermatophyta</taxon>
        <taxon>Magnoliopsida</taxon>
        <taxon>eudicotyledons</taxon>
        <taxon>Gunneridae</taxon>
        <taxon>Pentapetalae</taxon>
        <taxon>rosids</taxon>
        <taxon>malvids</taxon>
        <taxon>Brassicales</taxon>
        <taxon>Brassicaceae</taxon>
        <taxon>Camelineae</taxon>
        <taxon>Arabidopsis</taxon>
    </lineage>
</organism>
<evidence type="ECO:0000250" key="1">
    <source>
        <dbReference type="UniProtKB" id="Q9LNF2"/>
    </source>
</evidence>
<evidence type="ECO:0000250" key="2">
    <source>
        <dbReference type="UniProtKB" id="Q9STY5"/>
    </source>
</evidence>
<evidence type="ECO:0000255" key="3"/>
<evidence type="ECO:0000255" key="4">
    <source>
        <dbReference type="PROSITE-ProRule" id="PRU00498"/>
    </source>
</evidence>
<evidence type="ECO:0000269" key="5">
    <source>
    </source>
</evidence>
<evidence type="ECO:0000269" key="6">
    <source>
    </source>
</evidence>
<evidence type="ECO:0000269" key="7">
    <source>
    </source>
</evidence>
<evidence type="ECO:0000303" key="8">
    <source>
    </source>
</evidence>
<evidence type="ECO:0000305" key="9"/>
<evidence type="ECO:0000312" key="10">
    <source>
        <dbReference type="Araport" id="AT4G25250"/>
    </source>
</evidence>
<evidence type="ECO:0000312" key="11">
    <source>
        <dbReference type="EMBL" id="CAA23066.1"/>
    </source>
</evidence>
<gene>
    <name evidence="8" type="primary">PMEI4</name>
    <name evidence="10" type="ordered locus">At4g25250</name>
    <name evidence="11" type="ORF">F24A6.90</name>
</gene>
<sequence>MLRFVVLSLTLMVFINSSNFPKTAATPPGTYQNHTTYVKTACNSTTYPTMCYNCLSSYSSTIKSDPIKLCTTSLNLNVKSAKNATLVVSNLLQKAKAAKSHEVSILKDCVDEMKDTIDELKQAVAEMKYVRGGGKTTEEHLKNVKTWVSSALTDEGTCTDGFEEGRVNVETKKKVKKAISELSKTTSNTLALLTHYLSY</sequence>
<proteinExistence type="evidence at protein level"/>
<feature type="signal peptide" evidence="3">
    <location>
        <begin position="1"/>
        <end position="25"/>
    </location>
</feature>
<feature type="chain" id="PRO_5008430272" description="Pectinesterase inhibitor 4">
    <location>
        <begin position="26"/>
        <end position="199"/>
    </location>
</feature>
<feature type="glycosylation site" description="N-linked (GlcNAc...) asparagine" evidence="4">
    <location>
        <position position="16"/>
    </location>
</feature>
<feature type="glycosylation site" description="N-linked (GlcNAc...) asparagine" evidence="4">
    <location>
        <position position="33"/>
    </location>
</feature>
<feature type="glycosylation site" description="N-linked (GlcNAc...) asparagine" evidence="4">
    <location>
        <position position="43"/>
    </location>
</feature>
<feature type="glycosylation site" description="N-linked (GlcNAc...) asparagine" evidence="4">
    <location>
        <position position="83"/>
    </location>
</feature>
<feature type="disulfide bond" evidence="1">
    <location>
        <begin position="42"/>
        <end position="51"/>
    </location>
</feature>
<feature type="disulfide bond" evidence="1">
    <location>
        <begin position="109"/>
        <end position="158"/>
    </location>
</feature>
<feature type="sequence conflict" description="In Ref. 5; AAM62643." evidence="9" ref="5">
    <original>V</original>
    <variation>I</variation>
    <location>
        <position position="6"/>
    </location>
</feature>
<feature type="sequence conflict" description="In Ref. 5; AAM62643." evidence="9" ref="5">
    <original>L</original>
    <variation>I</variation>
    <location>
        <position position="11"/>
    </location>
</feature>
<feature type="sequence conflict" description="In Ref. 5; AAM62643." evidence="9" ref="5">
    <original>K</original>
    <variation>N</variation>
    <location>
        <position position="22"/>
    </location>
</feature>
<feature type="sequence conflict" description="In Ref. 5; AAM62643." evidence="9" ref="5">
    <original>A</original>
    <variation>T</variation>
    <location>
        <position position="98"/>
    </location>
</feature>
<feature type="sequence conflict" description="In Ref. 5; AAM62643." evidence="9" ref="5">
    <original>M</original>
    <variation>I</variation>
    <location>
        <position position="113"/>
    </location>
</feature>
<feature type="sequence conflict" description="In Ref. 5; AAM62643." evidence="9" ref="5">
    <original>I</original>
    <variation>V</variation>
    <location>
        <position position="179"/>
    </location>
</feature>
<keyword id="KW-0052">Apoplast</keyword>
<keyword id="KW-1015">Disulfide bond</keyword>
<keyword id="KW-0325">Glycoprotein</keyword>
<keyword id="KW-1185">Reference proteome</keyword>
<keyword id="KW-0964">Secreted</keyword>
<keyword id="KW-0732">Signal</keyword>
<accession>Q9SB38</accession>
<accession>Q8LEH1</accession>
<dbReference type="EMBL" id="AL035396">
    <property type="protein sequence ID" value="CAA23066.1"/>
    <property type="molecule type" value="Genomic_DNA"/>
</dbReference>
<dbReference type="EMBL" id="AL161563">
    <property type="protein sequence ID" value="CAB81336.1"/>
    <property type="molecule type" value="Genomic_DNA"/>
</dbReference>
<dbReference type="EMBL" id="CP002687">
    <property type="protein sequence ID" value="AEE85031.1"/>
    <property type="molecule type" value="Genomic_DNA"/>
</dbReference>
<dbReference type="EMBL" id="BT004588">
    <property type="protein sequence ID" value="AAO42834.1"/>
    <property type="molecule type" value="mRNA"/>
</dbReference>
<dbReference type="EMBL" id="AK227550">
    <property type="protein sequence ID" value="BAE99546.1"/>
    <property type="molecule type" value="mRNA"/>
</dbReference>
<dbReference type="EMBL" id="AY085416">
    <property type="protein sequence ID" value="AAM62643.1"/>
    <property type="molecule type" value="mRNA"/>
</dbReference>
<dbReference type="PIR" id="T05546">
    <property type="entry name" value="T05546"/>
</dbReference>
<dbReference type="RefSeq" id="NP_194255.1">
    <property type="nucleotide sequence ID" value="NM_118657.3"/>
</dbReference>
<dbReference type="SMR" id="Q9SB38"/>
<dbReference type="FunCoup" id="Q9SB38">
    <property type="interactions" value="9"/>
</dbReference>
<dbReference type="STRING" id="3702.Q9SB38"/>
<dbReference type="GlyCosmos" id="Q9SB38">
    <property type="glycosylation" value="4 sites, No reported glycans"/>
</dbReference>
<dbReference type="GlyGen" id="Q9SB38">
    <property type="glycosylation" value="4 sites"/>
</dbReference>
<dbReference type="iPTMnet" id="Q9SB38"/>
<dbReference type="PaxDb" id="3702-AT4G25250.1"/>
<dbReference type="ProteomicsDB" id="226209"/>
<dbReference type="DNASU" id="828628"/>
<dbReference type="EnsemblPlants" id="AT4G25250.1">
    <property type="protein sequence ID" value="AT4G25250.1"/>
    <property type="gene ID" value="AT4G25250"/>
</dbReference>
<dbReference type="GeneID" id="828628"/>
<dbReference type="Gramene" id="AT4G25250.1">
    <property type="protein sequence ID" value="AT4G25250.1"/>
    <property type="gene ID" value="AT4G25250"/>
</dbReference>
<dbReference type="KEGG" id="ath:AT4G25250"/>
<dbReference type="Araport" id="AT4G25250"/>
<dbReference type="TAIR" id="AT4G25250">
    <property type="gene designation" value="PMEI4"/>
</dbReference>
<dbReference type="eggNOG" id="KOG0017">
    <property type="taxonomic scope" value="Eukaryota"/>
</dbReference>
<dbReference type="HOGENOM" id="CLU_033761_0_2_1"/>
<dbReference type="InParanoid" id="Q9SB38"/>
<dbReference type="OMA" id="SCMANIT"/>
<dbReference type="PhylomeDB" id="Q9SB38"/>
<dbReference type="PRO" id="PR:Q9SB38"/>
<dbReference type="Proteomes" id="UP000006548">
    <property type="component" value="Chromosome 4"/>
</dbReference>
<dbReference type="ExpressionAtlas" id="Q9SB38">
    <property type="expression patterns" value="baseline and differential"/>
</dbReference>
<dbReference type="GO" id="GO:0048046">
    <property type="term" value="C:apoplast"/>
    <property type="evidence" value="ECO:0007669"/>
    <property type="project" value="UniProtKB-SubCell"/>
</dbReference>
<dbReference type="GO" id="GO:0009505">
    <property type="term" value="C:plant-type cell wall"/>
    <property type="evidence" value="ECO:0000314"/>
    <property type="project" value="TAIR"/>
</dbReference>
<dbReference type="GO" id="GO:0046910">
    <property type="term" value="F:pectinesterase inhibitor activity"/>
    <property type="evidence" value="ECO:0000314"/>
    <property type="project" value="UniProtKB"/>
</dbReference>
<dbReference type="GO" id="GO:2000280">
    <property type="term" value="P:regulation of root development"/>
    <property type="evidence" value="ECO:0000315"/>
    <property type="project" value="UniProtKB"/>
</dbReference>
<dbReference type="CDD" id="cd15798">
    <property type="entry name" value="PMEI-like_3"/>
    <property type="match status" value="1"/>
</dbReference>
<dbReference type="FunFam" id="1.20.140.40:FF:000034">
    <property type="entry name" value="Invertase/pectin methylesterase inhibitor family protein"/>
    <property type="match status" value="1"/>
</dbReference>
<dbReference type="Gene3D" id="1.20.140.40">
    <property type="entry name" value="Invertase/pectin methylesterase inhibitor family protein"/>
    <property type="match status" value="1"/>
</dbReference>
<dbReference type="InterPro" id="IPR035513">
    <property type="entry name" value="Invertase/methylesterase_inhib"/>
</dbReference>
<dbReference type="InterPro" id="IPR006501">
    <property type="entry name" value="Pectinesterase_inhib_dom"/>
</dbReference>
<dbReference type="InterPro" id="IPR051955">
    <property type="entry name" value="PME_Inhibitor"/>
</dbReference>
<dbReference type="NCBIfam" id="TIGR01614">
    <property type="entry name" value="PME_inhib"/>
    <property type="match status" value="1"/>
</dbReference>
<dbReference type="PANTHER" id="PTHR31080:SF119">
    <property type="entry name" value="PECTINESTERASE INHIBITOR 4"/>
    <property type="match status" value="1"/>
</dbReference>
<dbReference type="PANTHER" id="PTHR31080">
    <property type="entry name" value="PECTINESTERASE INHIBITOR-LIKE"/>
    <property type="match status" value="1"/>
</dbReference>
<dbReference type="Pfam" id="PF04043">
    <property type="entry name" value="PMEI"/>
    <property type="match status" value="1"/>
</dbReference>
<dbReference type="SMART" id="SM00856">
    <property type="entry name" value="PMEI"/>
    <property type="match status" value="1"/>
</dbReference>
<dbReference type="SUPFAM" id="SSF101148">
    <property type="entry name" value="Plant invertase/pectin methylesterase inhibitor"/>
    <property type="match status" value="1"/>
</dbReference>
<comment type="function">
    <text evidence="6 7">Pectin methylesterase (PME) inhibitor that can target the root-expressed PME17 and PME3 in a pH-dependent manner, mainly in slightly acidic conditions (pH 6.3 and 5.0) but not at pH 7.5; this processus relies on changes in the protonation of amino acids involved in intermolecular and intramolecular interactions (PubMed:25826258, PubMed:28034952). Regulate de-methylesterification of pectins in roots and affects root growth (PubMed:25826258).</text>
</comment>
<comment type="subunit">
    <text evidence="7">Binds reversibly to PME3 to inhibit its activity; the stability of the PME3-PMEI4 complex and the inhibition of the pectin methylesterase (PME) activity is pH-dependent, based on protonation status of amino-acids at the complex interface.</text>
</comment>
<comment type="subcellular location">
    <subcellularLocation>
        <location evidence="2">Secreted</location>
        <location evidence="2">Extracellular space</location>
        <location evidence="2">Apoplast</location>
    </subcellularLocation>
</comment>
<comment type="tissue specificity">
    <text evidence="6 7">Expressed in outer cell layer of roots, particularly in the root-hair zone (PubMed:25826258). Expressed in roots and siliques (PubMed:28034952).</text>
</comment>
<comment type="developmental stage">
    <text evidence="5">developmentally up-regulated in roots during growth acceleration of dark-grown hypocotyls.</text>
</comment>
<comment type="similarity">
    <text evidence="9">Belongs to the PMEI family.</text>
</comment>
<reference key="1">
    <citation type="journal article" date="1999" name="Nature">
        <title>Sequence and analysis of chromosome 4 of the plant Arabidopsis thaliana.</title>
        <authorList>
            <person name="Mayer K.F.X."/>
            <person name="Schueller C."/>
            <person name="Wambutt R."/>
            <person name="Murphy G."/>
            <person name="Volckaert G."/>
            <person name="Pohl T."/>
            <person name="Duesterhoeft A."/>
            <person name="Stiekema W."/>
            <person name="Entian K.-D."/>
            <person name="Terryn N."/>
            <person name="Harris B."/>
            <person name="Ansorge W."/>
            <person name="Brandt P."/>
            <person name="Grivell L.A."/>
            <person name="Rieger M."/>
            <person name="Weichselgartner M."/>
            <person name="de Simone V."/>
            <person name="Obermaier B."/>
            <person name="Mache R."/>
            <person name="Mueller M."/>
            <person name="Kreis M."/>
            <person name="Delseny M."/>
            <person name="Puigdomenech P."/>
            <person name="Watson M."/>
            <person name="Schmidtheini T."/>
            <person name="Reichert B."/>
            <person name="Portetelle D."/>
            <person name="Perez-Alonso M."/>
            <person name="Boutry M."/>
            <person name="Bancroft I."/>
            <person name="Vos P."/>
            <person name="Hoheisel J."/>
            <person name="Zimmermann W."/>
            <person name="Wedler H."/>
            <person name="Ridley P."/>
            <person name="Langham S.-A."/>
            <person name="McCullagh B."/>
            <person name="Bilham L."/>
            <person name="Robben J."/>
            <person name="van der Schueren J."/>
            <person name="Grymonprez B."/>
            <person name="Chuang Y.-J."/>
            <person name="Vandenbussche F."/>
            <person name="Braeken M."/>
            <person name="Weltjens I."/>
            <person name="Voet M."/>
            <person name="Bastiaens I."/>
            <person name="Aert R."/>
            <person name="Defoor E."/>
            <person name="Weitzenegger T."/>
            <person name="Bothe G."/>
            <person name="Ramsperger U."/>
            <person name="Hilbert H."/>
            <person name="Braun M."/>
            <person name="Holzer E."/>
            <person name="Brandt A."/>
            <person name="Peters S."/>
            <person name="van Staveren M."/>
            <person name="Dirkse W."/>
            <person name="Mooijman P."/>
            <person name="Klein Lankhorst R."/>
            <person name="Rose M."/>
            <person name="Hauf J."/>
            <person name="Koetter P."/>
            <person name="Berneiser S."/>
            <person name="Hempel S."/>
            <person name="Feldpausch M."/>
            <person name="Lamberth S."/>
            <person name="Van den Daele H."/>
            <person name="De Keyser A."/>
            <person name="Buysshaert C."/>
            <person name="Gielen J."/>
            <person name="Villarroel R."/>
            <person name="De Clercq R."/>
            <person name="van Montagu M."/>
            <person name="Rogers J."/>
            <person name="Cronin A."/>
            <person name="Quail M.A."/>
            <person name="Bray-Allen S."/>
            <person name="Clark L."/>
            <person name="Doggett J."/>
            <person name="Hall S."/>
            <person name="Kay M."/>
            <person name="Lennard N."/>
            <person name="McLay K."/>
            <person name="Mayes R."/>
            <person name="Pettett A."/>
            <person name="Rajandream M.A."/>
            <person name="Lyne M."/>
            <person name="Benes V."/>
            <person name="Rechmann S."/>
            <person name="Borkova D."/>
            <person name="Bloecker H."/>
            <person name="Scharfe M."/>
            <person name="Grimm M."/>
            <person name="Loehnert T.-H."/>
            <person name="Dose S."/>
            <person name="de Haan M."/>
            <person name="Maarse A.C."/>
            <person name="Schaefer M."/>
            <person name="Mueller-Auer S."/>
            <person name="Gabel C."/>
            <person name="Fuchs M."/>
            <person name="Fartmann B."/>
            <person name="Granderath K."/>
            <person name="Dauner D."/>
            <person name="Herzl A."/>
            <person name="Neumann S."/>
            <person name="Argiriou A."/>
            <person name="Vitale D."/>
            <person name="Liguori R."/>
            <person name="Piravandi E."/>
            <person name="Massenet O."/>
            <person name="Quigley F."/>
            <person name="Clabauld G."/>
            <person name="Muendlein A."/>
            <person name="Felber R."/>
            <person name="Schnabl S."/>
            <person name="Hiller R."/>
            <person name="Schmidt W."/>
            <person name="Lecharny A."/>
            <person name="Aubourg S."/>
            <person name="Chefdor F."/>
            <person name="Cooke R."/>
            <person name="Berger C."/>
            <person name="Monfort A."/>
            <person name="Casacuberta E."/>
            <person name="Gibbons T."/>
            <person name="Weber N."/>
            <person name="Vandenbol M."/>
            <person name="Bargues M."/>
            <person name="Terol J."/>
            <person name="Torres A."/>
            <person name="Perez-Perez A."/>
            <person name="Purnelle B."/>
            <person name="Bent E."/>
            <person name="Johnson S."/>
            <person name="Tacon D."/>
            <person name="Jesse T."/>
            <person name="Heijnen L."/>
            <person name="Schwarz S."/>
            <person name="Scholler P."/>
            <person name="Heber S."/>
            <person name="Francs P."/>
            <person name="Bielke C."/>
            <person name="Frishman D."/>
            <person name="Haase D."/>
            <person name="Lemcke K."/>
            <person name="Mewes H.-W."/>
            <person name="Stocker S."/>
            <person name="Zaccaria P."/>
            <person name="Bevan M."/>
            <person name="Wilson R.K."/>
            <person name="de la Bastide M."/>
            <person name="Habermann K."/>
            <person name="Parnell L."/>
            <person name="Dedhia N."/>
            <person name="Gnoj L."/>
            <person name="Schutz K."/>
            <person name="Huang E."/>
            <person name="Spiegel L."/>
            <person name="Sekhon M."/>
            <person name="Murray J."/>
            <person name="Sheet P."/>
            <person name="Cordes M."/>
            <person name="Abu-Threideh J."/>
            <person name="Stoneking T."/>
            <person name="Kalicki J."/>
            <person name="Graves T."/>
            <person name="Harmon G."/>
            <person name="Edwards J."/>
            <person name="Latreille P."/>
            <person name="Courtney L."/>
            <person name="Cloud J."/>
            <person name="Abbott A."/>
            <person name="Scott K."/>
            <person name="Johnson D."/>
            <person name="Minx P."/>
            <person name="Bentley D."/>
            <person name="Fulton B."/>
            <person name="Miller N."/>
            <person name="Greco T."/>
            <person name="Kemp K."/>
            <person name="Kramer J."/>
            <person name="Fulton L."/>
            <person name="Mardis E."/>
            <person name="Dante M."/>
            <person name="Pepin K."/>
            <person name="Hillier L.W."/>
            <person name="Nelson J."/>
            <person name="Spieth J."/>
            <person name="Ryan E."/>
            <person name="Andrews S."/>
            <person name="Geisel C."/>
            <person name="Layman D."/>
            <person name="Du H."/>
            <person name="Ali J."/>
            <person name="Berghoff A."/>
            <person name="Jones K."/>
            <person name="Drone K."/>
            <person name="Cotton M."/>
            <person name="Joshu C."/>
            <person name="Antonoiu B."/>
            <person name="Zidanic M."/>
            <person name="Strong C."/>
            <person name="Sun H."/>
            <person name="Lamar B."/>
            <person name="Yordan C."/>
            <person name="Ma P."/>
            <person name="Zhong J."/>
            <person name="Preston R."/>
            <person name="Vil D."/>
            <person name="Shekher M."/>
            <person name="Matero A."/>
            <person name="Shah R."/>
            <person name="Swaby I.K."/>
            <person name="O'Shaughnessy A."/>
            <person name="Rodriguez M."/>
            <person name="Hoffman J."/>
            <person name="Till S."/>
            <person name="Granat S."/>
            <person name="Shohdy N."/>
            <person name="Hasegawa A."/>
            <person name="Hameed A."/>
            <person name="Lodhi M."/>
            <person name="Johnson A."/>
            <person name="Chen E."/>
            <person name="Marra M.A."/>
            <person name="Martienssen R."/>
            <person name="McCombie W.R."/>
        </authorList>
    </citation>
    <scope>NUCLEOTIDE SEQUENCE [LARGE SCALE GENOMIC DNA]</scope>
    <source>
        <strain>cv. Columbia</strain>
    </source>
</reference>
<reference key="2">
    <citation type="journal article" date="2017" name="Plant J.">
        <title>Araport11: a complete reannotation of the Arabidopsis thaliana reference genome.</title>
        <authorList>
            <person name="Cheng C.Y."/>
            <person name="Krishnakumar V."/>
            <person name="Chan A.P."/>
            <person name="Thibaud-Nissen F."/>
            <person name="Schobel S."/>
            <person name="Town C.D."/>
        </authorList>
    </citation>
    <scope>GENOME REANNOTATION</scope>
    <source>
        <strain>cv. Columbia</strain>
    </source>
</reference>
<reference key="3">
    <citation type="journal article" date="2003" name="Science">
        <title>Empirical analysis of transcriptional activity in the Arabidopsis genome.</title>
        <authorList>
            <person name="Yamada K."/>
            <person name="Lim J."/>
            <person name="Dale J.M."/>
            <person name="Chen H."/>
            <person name="Shinn P."/>
            <person name="Palm C.J."/>
            <person name="Southwick A.M."/>
            <person name="Wu H.C."/>
            <person name="Kim C.J."/>
            <person name="Nguyen M."/>
            <person name="Pham P.K."/>
            <person name="Cheuk R.F."/>
            <person name="Karlin-Newmann G."/>
            <person name="Liu S.X."/>
            <person name="Lam B."/>
            <person name="Sakano H."/>
            <person name="Wu T."/>
            <person name="Yu G."/>
            <person name="Miranda M."/>
            <person name="Quach H.L."/>
            <person name="Tripp M."/>
            <person name="Chang C.H."/>
            <person name="Lee J.M."/>
            <person name="Toriumi M.J."/>
            <person name="Chan M.M."/>
            <person name="Tang C.C."/>
            <person name="Onodera C.S."/>
            <person name="Deng J.M."/>
            <person name="Akiyama K."/>
            <person name="Ansari Y."/>
            <person name="Arakawa T."/>
            <person name="Banh J."/>
            <person name="Banno F."/>
            <person name="Bowser L."/>
            <person name="Brooks S.Y."/>
            <person name="Carninci P."/>
            <person name="Chao Q."/>
            <person name="Choy N."/>
            <person name="Enju A."/>
            <person name="Goldsmith A.D."/>
            <person name="Gurjal M."/>
            <person name="Hansen N.F."/>
            <person name="Hayashizaki Y."/>
            <person name="Johnson-Hopson C."/>
            <person name="Hsuan V.W."/>
            <person name="Iida K."/>
            <person name="Karnes M."/>
            <person name="Khan S."/>
            <person name="Koesema E."/>
            <person name="Ishida J."/>
            <person name="Jiang P.X."/>
            <person name="Jones T."/>
            <person name="Kawai J."/>
            <person name="Kamiya A."/>
            <person name="Meyers C."/>
            <person name="Nakajima M."/>
            <person name="Narusaka M."/>
            <person name="Seki M."/>
            <person name="Sakurai T."/>
            <person name="Satou M."/>
            <person name="Tamse R."/>
            <person name="Vaysberg M."/>
            <person name="Wallender E.K."/>
            <person name="Wong C."/>
            <person name="Yamamura Y."/>
            <person name="Yuan S."/>
            <person name="Shinozaki K."/>
            <person name="Davis R.W."/>
            <person name="Theologis A."/>
            <person name="Ecker J.R."/>
        </authorList>
    </citation>
    <scope>NUCLEOTIDE SEQUENCE [LARGE SCALE MRNA]</scope>
    <source>
        <strain>cv. Columbia</strain>
    </source>
</reference>
<reference key="4">
    <citation type="submission" date="2006-07" db="EMBL/GenBank/DDBJ databases">
        <title>Large-scale analysis of RIKEN Arabidopsis full-length (RAFL) cDNAs.</title>
        <authorList>
            <person name="Totoki Y."/>
            <person name="Seki M."/>
            <person name="Ishida J."/>
            <person name="Nakajima M."/>
            <person name="Enju A."/>
            <person name="Kamiya A."/>
            <person name="Narusaka M."/>
            <person name="Shin-i T."/>
            <person name="Nakagawa M."/>
            <person name="Sakamoto N."/>
            <person name="Oishi K."/>
            <person name="Kohara Y."/>
            <person name="Kobayashi M."/>
            <person name="Toyoda A."/>
            <person name="Sakaki Y."/>
            <person name="Sakurai T."/>
            <person name="Iida K."/>
            <person name="Akiyama K."/>
            <person name="Satou M."/>
            <person name="Toyoda T."/>
            <person name="Konagaya A."/>
            <person name="Carninci P."/>
            <person name="Kawai J."/>
            <person name="Hayashizaki Y."/>
            <person name="Shinozaki K."/>
        </authorList>
    </citation>
    <scope>NUCLEOTIDE SEQUENCE [LARGE SCALE MRNA]</scope>
    <source>
        <strain>cv. Columbia</strain>
    </source>
</reference>
<reference key="5">
    <citation type="submission" date="2002-03" db="EMBL/GenBank/DDBJ databases">
        <title>Full-length cDNA from Arabidopsis thaliana.</title>
        <authorList>
            <person name="Brover V.V."/>
            <person name="Troukhan M.E."/>
            <person name="Alexandrov N.A."/>
            <person name="Lu Y.-P."/>
            <person name="Flavell R.B."/>
            <person name="Feldmann K.A."/>
        </authorList>
    </citation>
    <scope>NUCLEOTIDE SEQUENCE [LARGE SCALE MRNA]</scope>
</reference>
<reference key="6">
    <citation type="journal article" date="2010" name="New Phytol.">
        <title>A role for pectin de-methylesterification in a developmentally regulated growth acceleration in dark-grown Arabidopsis hypocotyls.</title>
        <authorList>
            <person name="Pelletier S."/>
            <person name="Van Orden J."/>
            <person name="Wolf S."/>
            <person name="Vissenberg K."/>
            <person name="Delacourt J."/>
            <person name="Ndong Y.A."/>
            <person name="Pelloux J."/>
            <person name="Bischoff V."/>
            <person name="Urbain A."/>
            <person name="Mouille G."/>
            <person name="Lemonnier G."/>
            <person name="Renou J.P."/>
            <person name="Hoefte H."/>
        </authorList>
    </citation>
    <scope>DEVELOPMENTAL STAGE</scope>
</reference>
<reference key="7">
    <citation type="journal article" date="2015" name="Plant Signal. Behav.">
        <title>Arabidopsis PME17 activity can be controlled by pectin methylesterase inhibitor4.</title>
        <authorList>
            <person name="Senechal F."/>
            <person name="Mareck A."/>
            <person name="Marcelo P."/>
            <person name="Lerouge P."/>
            <person name="Pelloux J."/>
        </authorList>
    </citation>
    <scope>FUNCTION</scope>
    <scope>TISSUE SPECIFICITY</scope>
</reference>
<reference key="8">
    <citation type="journal article" date="2017" name="Plant Physiol.">
        <title>Combined experimental and computational approaches reveal distinct pH-dependence of pectin methyl esterase inhibitors.</title>
        <authorList>
            <person name="Hocq L."/>
            <person name="Senechal F."/>
            <person name="Lefebvre V."/>
            <person name="Lehner A."/>
            <person name="Domon J.-M."/>
            <person name="Mollet J.-C."/>
            <person name="Dehors J."/>
            <person name="Pageau K."/>
            <person name="Marcelo P."/>
            <person name="Guerineau F."/>
            <person name="Kolsek K."/>
            <person name="Mercadante D."/>
            <person name="Pelloux J."/>
        </authorList>
    </citation>
    <scope>FUNCTION</scope>
    <scope>TISSUE SPECIFICITY</scope>
    <scope>INTERACTION WITH PME3</scope>
</reference>